<gene>
    <name type="primary">celS</name>
</gene>
<accession>P0C2S5</accession>
<accession>P38686</accession>
<sequence>MVKSRKISILLAVAMLVSIMIPTTAFAGPTKAPTKDGTSYKDLFLELYGKIKDPKNGYFSPDEGIPYHSIETLIVEAPDYGHVTTSEAFSYYVWLEAMYGNLTGNWSGVETAWKVMEDWIIPDSTEQPGMSSYNPNSPATYADEYEDPSYYPSELKFDTVRVGSDPVHNDLVSAYGPNMYLMHWLMDVDNWYGFGTGTRATFINTFQRGEQESTWETIPHPSIEEFKYGGPNGFLDLFTKDRSYAKQWRYTNAPDAEGRAIQAVYWANKWAKEQGKGSAVASVVSKAAKMGDFLRNDMFDKYFMKIGAQDKTPATGYDSAHYLMAWYTAWGGGIGASWAWKIGCSHAHFGYQNPFQGWVSATQSDFAPKSSNGKRDWTTSYKRQLEFYQWLQSAEGGIAGGATNSWNGRYEKYPAGTSTFYGMAYVPHPVYADPGSNQWFGFQAWSMQRVMEYYLETGDSSVKNLIKKWVDWVMSEIKLYDDGTFAIPSDLEWSGQPDTWTGTYTGNPNLHVRVTSYGTDLGVAGSLANALATYAAATERWEGKLDTKARDMAAELVNRAWYNFYCSEGKGVVTEEARADYKRFFEQEVYVPAGWSGTMPNGDKIQPGIKFIDIRTKYRQDPYYDIVYQAYLRGEAPVLNYHRFWHEVDLAVAMGVLATYFPDMTYKVPGTPSTKLYGDVNDDGKVNSTDAVALKRYVLRSGISINTDNADLNEDGRVNSTDLGILKRYILKEIDTLPYKN</sequence>
<dbReference type="EC" id="3.2.1.176"/>
<dbReference type="PDB" id="1DAQ">
    <property type="method" value="NMR"/>
    <property type="chains" value="A=673-741"/>
</dbReference>
<dbReference type="PDB" id="1DAV">
    <property type="method" value="NMR"/>
    <property type="chains" value="A=673-741"/>
</dbReference>
<dbReference type="PDB" id="1L1Y">
    <property type="method" value="X-ray"/>
    <property type="resolution" value="2.40 A"/>
    <property type="chains" value="A/B/C/D/E/F=1-678"/>
</dbReference>
<dbReference type="PDB" id="1L2A">
    <property type="method" value="X-ray"/>
    <property type="resolution" value="2.50 A"/>
    <property type="chains" value="A/B/C/D/E/F=1-678"/>
</dbReference>
<dbReference type="PDB" id="2MTE">
    <property type="method" value="NMR"/>
    <property type="chains" value="A=673-741"/>
</dbReference>
<dbReference type="PDBsum" id="1DAQ"/>
<dbReference type="PDBsum" id="1DAV"/>
<dbReference type="PDBsum" id="1L1Y"/>
<dbReference type="PDBsum" id="1L2A"/>
<dbReference type="PDBsum" id="2MTE"/>
<dbReference type="BMRB" id="P0C2S5"/>
<dbReference type="SMR" id="P0C2S5"/>
<dbReference type="IntAct" id="P0C2S5">
    <property type="interactions" value="1"/>
</dbReference>
<dbReference type="DrugBank" id="DB02379">
    <property type="generic name" value="Beta-D-Glucose"/>
</dbReference>
<dbReference type="CAZy" id="GH48">
    <property type="family name" value="Glycoside Hydrolase Family 48"/>
</dbReference>
<dbReference type="BRENDA" id="3.2.1.176">
    <property type="organism ID" value="1530"/>
</dbReference>
<dbReference type="EvolutionaryTrace" id="P0C2S5"/>
<dbReference type="GO" id="GO:0005576">
    <property type="term" value="C:extracellular region"/>
    <property type="evidence" value="ECO:0007669"/>
    <property type="project" value="UniProtKB-SubCell"/>
</dbReference>
<dbReference type="GO" id="GO:0008810">
    <property type="term" value="F:cellulase activity"/>
    <property type="evidence" value="ECO:0007669"/>
    <property type="project" value="InterPro"/>
</dbReference>
<dbReference type="GO" id="GO:0102252">
    <property type="term" value="F:cellulose 1,4-beta-cellobiosidase activity (reducing end)"/>
    <property type="evidence" value="ECO:0007669"/>
    <property type="project" value="UniProtKB-EC"/>
</dbReference>
<dbReference type="GO" id="GO:0046872">
    <property type="term" value="F:metal ion binding"/>
    <property type="evidence" value="ECO:0007669"/>
    <property type="project" value="UniProtKB-KW"/>
</dbReference>
<dbReference type="GO" id="GO:0030245">
    <property type="term" value="P:cellulose catabolic process"/>
    <property type="evidence" value="ECO:0007669"/>
    <property type="project" value="UniProtKB-KW"/>
</dbReference>
<dbReference type="CDD" id="cd14256">
    <property type="entry name" value="Dockerin_I"/>
    <property type="match status" value="1"/>
</dbReference>
<dbReference type="FunFam" id="1.10.1330.10:FF:000001">
    <property type="entry name" value="Endoglucanase D"/>
    <property type="match status" value="1"/>
</dbReference>
<dbReference type="Gene3D" id="1.50.10.10">
    <property type="match status" value="1"/>
</dbReference>
<dbReference type="Gene3D" id="1.10.1330.10">
    <property type="entry name" value="Dockerin domain"/>
    <property type="match status" value="1"/>
</dbReference>
<dbReference type="Gene3D" id="2.170.160.10">
    <property type="entry name" value="Endo-1,4-beta-glucanase f. Domain 2"/>
    <property type="match status" value="1"/>
</dbReference>
<dbReference type="Gene3D" id="4.10.870.10">
    <property type="entry name" value="Endo-1,4-beta-glucanase f. Domain 3"/>
    <property type="match status" value="1"/>
</dbReference>
<dbReference type="InterPro" id="IPR008928">
    <property type="entry name" value="6-hairpin_glycosidase_sf"/>
</dbReference>
<dbReference type="InterPro" id="IPR012341">
    <property type="entry name" value="6hp_glycosidase-like_sf"/>
</dbReference>
<dbReference type="InterPro" id="IPR002105">
    <property type="entry name" value="Dockerin_1_rpt"/>
</dbReference>
<dbReference type="InterPro" id="IPR016134">
    <property type="entry name" value="Dockerin_dom"/>
</dbReference>
<dbReference type="InterPro" id="IPR036439">
    <property type="entry name" value="Dockerin_dom_sf"/>
</dbReference>
<dbReference type="InterPro" id="IPR023309">
    <property type="entry name" value="Endo-1-4-beta-glucanase_dom2"/>
</dbReference>
<dbReference type="InterPro" id="IPR027390">
    <property type="entry name" value="Endoglucanase_F_dom3"/>
</dbReference>
<dbReference type="InterPro" id="IPR000556">
    <property type="entry name" value="Glyco_hydro_48F"/>
</dbReference>
<dbReference type="Pfam" id="PF00404">
    <property type="entry name" value="Dockerin_1"/>
    <property type="match status" value="1"/>
</dbReference>
<dbReference type="Pfam" id="PF02011">
    <property type="entry name" value="Glyco_hydro_48"/>
    <property type="match status" value="1"/>
</dbReference>
<dbReference type="PRINTS" id="PR00844">
    <property type="entry name" value="GLHYDRLASE48"/>
</dbReference>
<dbReference type="SUPFAM" id="SSF48208">
    <property type="entry name" value="Six-hairpin glycosidases"/>
    <property type="match status" value="1"/>
</dbReference>
<dbReference type="SUPFAM" id="SSF63446">
    <property type="entry name" value="Type I dockerin domain"/>
    <property type="match status" value="1"/>
</dbReference>
<dbReference type="PROSITE" id="PS00448">
    <property type="entry name" value="CLOS_CELLULOSOME_RPT"/>
    <property type="match status" value="2"/>
</dbReference>
<dbReference type="PROSITE" id="PS51766">
    <property type="entry name" value="DOCKERIN"/>
    <property type="match status" value="1"/>
</dbReference>
<comment type="function">
    <text evidence="5">This enzyme catalyzes the exohydrolysis of 1,4-beta-glucosidic linkages in cellulose with a preference for amorphous or crystalline cellulose over carboxymethyl cellulose.</text>
</comment>
<comment type="catalytic activity">
    <reaction evidence="5">
        <text>Hydrolysis of (1-&gt;4)-beta-D-glucosidic linkages in cellulose and similar substrates, releasing cellobiose from the reducing ends of the chains.</text>
        <dbReference type="EC" id="3.2.1.176"/>
    </reaction>
</comment>
<comment type="activity regulation">
    <text evidence="1">Inhibited by cellobiose and lactose, but not by glucose.</text>
</comment>
<comment type="subcellular location">
    <subcellularLocation>
        <location>Secreted</location>
    </subcellularLocation>
</comment>
<comment type="similarity">
    <text evidence="7">Belongs to the glycosyl hydrolase 48 (cellulase L) family.</text>
</comment>
<comment type="caution">
    <text evidence="7">The N-terminal sequence shown here has been extracted from PDB entry 1L1Y.</text>
</comment>
<organism>
    <name type="scientific">Acetivibrio thermocellus</name>
    <name type="common">Hungateiclostridium thermocellum</name>
    <name type="synonym">Clostridium thermocellum</name>
    <dbReference type="NCBI Taxonomy" id="1515"/>
    <lineage>
        <taxon>Bacteria</taxon>
        <taxon>Bacillati</taxon>
        <taxon>Bacillota</taxon>
        <taxon>Clostridia</taxon>
        <taxon>Eubacteriales</taxon>
        <taxon>Oscillospiraceae</taxon>
        <taxon>Acetivibrio</taxon>
    </lineage>
</organism>
<feature type="signal peptide" evidence="6">
    <location>
        <begin position="1"/>
        <end position="27"/>
    </location>
</feature>
<feature type="chain" id="PRO_0000008027" description="Cellulose 1,4-beta-cellobiosidase (reducing end) CelS">
    <location>
        <begin position="28"/>
        <end position="741"/>
    </location>
</feature>
<feature type="domain" description="Dockerin" evidence="2">
    <location>
        <begin position="673"/>
        <end position="739"/>
    </location>
</feature>
<feature type="active site" description="Proton donor" evidence="5">
    <location>
        <position position="87"/>
    </location>
</feature>
<feature type="active site" description="Nucleophile" evidence="5">
    <location>
        <position position="255"/>
    </location>
</feature>
<feature type="binding site" evidence="4">
    <location>
        <position position="76"/>
    </location>
    <ligand>
        <name>substrate</name>
    </ligand>
</feature>
<feature type="binding site" evidence="4">
    <location>
        <position position="140"/>
    </location>
    <ligand>
        <name>substrate</name>
    </ligand>
</feature>
<feature type="binding site" evidence="4">
    <location>
        <position position="204"/>
    </location>
    <ligand>
        <name>substrate</name>
    </ligand>
</feature>
<feature type="binding site" evidence="4">
    <location>
        <position position="241"/>
    </location>
    <ligand>
        <name>substrate</name>
    </ligand>
</feature>
<feature type="binding site" evidence="4">
    <location>
        <position position="247"/>
    </location>
    <ligand>
        <name>substrate</name>
    </ligand>
</feature>
<feature type="binding site">
    <location>
        <begin position="251"/>
        <end position="252"/>
    </location>
    <ligand>
        <name>substrate</name>
    </ligand>
</feature>
<feature type="binding site">
    <location>
        <begin position="301"/>
        <end position="302"/>
    </location>
    <ligand>
        <name>substrate</name>
    </ligand>
</feature>
<feature type="binding site">
    <location>
        <begin position="326"/>
        <end position="327"/>
    </location>
    <ligand>
        <name>substrate</name>
    </ligand>
</feature>
<feature type="binding site" evidence="4">
    <location>
        <position position="421"/>
    </location>
    <ligand>
        <name>substrate</name>
    </ligand>
</feature>
<feature type="binding site" evidence="4">
    <location>
        <position position="520"/>
    </location>
    <ligand>
        <name>substrate</name>
    </ligand>
</feature>
<feature type="binding site">
    <location>
        <begin position="645"/>
        <end position="646"/>
    </location>
    <ligand>
        <name>substrate</name>
    </ligand>
</feature>
<feature type="binding site" evidence="3">
    <location>
        <position position="679"/>
    </location>
    <ligand>
        <name>Ca(2+)</name>
        <dbReference type="ChEBI" id="CHEBI:29108"/>
        <label>1</label>
    </ligand>
</feature>
<feature type="binding site" evidence="3">
    <location>
        <position position="681"/>
    </location>
    <ligand>
        <name>Ca(2+)</name>
        <dbReference type="ChEBI" id="CHEBI:29108"/>
        <label>1</label>
    </ligand>
</feature>
<feature type="binding site" evidence="3">
    <location>
        <position position="683"/>
    </location>
    <ligand>
        <name>Ca(2+)</name>
        <dbReference type="ChEBI" id="CHEBI:29108"/>
        <label>1</label>
    </ligand>
</feature>
<feature type="binding site" evidence="3">
    <location>
        <position position="684"/>
    </location>
    <ligand>
        <name>Ca(2+)</name>
        <dbReference type="ChEBI" id="CHEBI:29108"/>
        <label>1</label>
    </ligand>
</feature>
<feature type="binding site" evidence="3">
    <location>
        <position position="685"/>
    </location>
    <ligand>
        <name>Ca(2+)</name>
        <dbReference type="ChEBI" id="CHEBI:29108"/>
        <label>1</label>
    </ligand>
</feature>
<feature type="binding site" evidence="3">
    <location>
        <position position="690"/>
    </location>
    <ligand>
        <name>Ca(2+)</name>
        <dbReference type="ChEBI" id="CHEBI:29108"/>
        <label>1</label>
    </ligand>
</feature>
<feature type="binding site" evidence="3">
    <location>
        <position position="711"/>
    </location>
    <ligand>
        <name>Ca(2+)</name>
        <dbReference type="ChEBI" id="CHEBI:29108"/>
        <label>2</label>
    </ligand>
</feature>
<feature type="binding site" evidence="3">
    <location>
        <position position="711"/>
    </location>
    <ligand>
        <name>Ca(2+)</name>
        <dbReference type="ChEBI" id="CHEBI:29108"/>
        <label>3</label>
    </ligand>
</feature>
<feature type="binding site" evidence="3">
    <location>
        <position position="712"/>
    </location>
    <ligand>
        <name>Ca(2+)</name>
        <dbReference type="ChEBI" id="CHEBI:29108"/>
        <label>2</label>
    </ligand>
</feature>
<feature type="binding site" evidence="3">
    <location>
        <position position="713"/>
    </location>
    <ligand>
        <name>Ca(2+)</name>
        <dbReference type="ChEBI" id="CHEBI:29108"/>
        <label>3</label>
    </ligand>
</feature>
<feature type="binding site" evidence="3">
    <location>
        <position position="715"/>
    </location>
    <ligand>
        <name>Ca(2+)</name>
        <dbReference type="ChEBI" id="CHEBI:29108"/>
        <label>3</label>
    </ligand>
</feature>
<feature type="binding site" evidence="3">
    <location>
        <position position="717"/>
    </location>
    <ligand>
        <name>Ca(2+)</name>
        <dbReference type="ChEBI" id="CHEBI:29108"/>
        <label>2</label>
    </ligand>
</feature>
<feature type="binding site" evidence="3">
    <location>
        <position position="717"/>
    </location>
    <ligand>
        <name>Ca(2+)</name>
        <dbReference type="ChEBI" id="CHEBI:29108"/>
        <label>3</label>
    </ligand>
</feature>
<feature type="binding site" evidence="3">
    <location>
        <position position="722"/>
    </location>
    <ligand>
        <name>Ca(2+)</name>
        <dbReference type="ChEBI" id="CHEBI:29108"/>
        <label>2</label>
    </ligand>
</feature>
<feature type="binding site" evidence="3">
    <location>
        <position position="722"/>
    </location>
    <ligand>
        <name>Ca(2+)</name>
        <dbReference type="ChEBI" id="CHEBI:29108"/>
        <label>3</label>
    </ligand>
</feature>
<feature type="helix" evidence="9">
    <location>
        <begin position="40"/>
        <end position="52"/>
    </location>
</feature>
<feature type="helix" evidence="9">
    <location>
        <begin position="54"/>
        <end position="56"/>
    </location>
</feature>
<feature type="turn" evidence="9">
    <location>
        <begin position="61"/>
        <end position="63"/>
    </location>
</feature>
<feature type="strand" evidence="9">
    <location>
        <begin position="68"/>
        <end position="70"/>
    </location>
</feature>
<feature type="strand" evidence="9">
    <location>
        <begin position="76"/>
        <end position="80"/>
    </location>
</feature>
<feature type="strand" evidence="9">
    <location>
        <begin position="83"/>
        <end position="85"/>
    </location>
</feature>
<feature type="helix" evidence="9">
    <location>
        <begin position="86"/>
        <end position="103"/>
    </location>
</feature>
<feature type="helix" evidence="9">
    <location>
        <begin position="107"/>
        <end position="119"/>
    </location>
</feature>
<feature type="helix" evidence="10">
    <location>
        <begin position="124"/>
        <end position="126"/>
    </location>
</feature>
<feature type="helix" evidence="9">
    <location>
        <begin position="130"/>
        <end position="132"/>
    </location>
</feature>
<feature type="helix" evidence="9">
    <location>
        <begin position="148"/>
        <end position="150"/>
    </location>
</feature>
<feature type="strand" evidence="9">
    <location>
        <begin position="152"/>
        <end position="154"/>
    </location>
</feature>
<feature type="turn" evidence="9">
    <location>
        <begin position="157"/>
        <end position="159"/>
    </location>
</feature>
<feature type="helix" evidence="9">
    <location>
        <begin position="168"/>
        <end position="175"/>
    </location>
</feature>
<feature type="strand" evidence="9">
    <location>
        <begin position="184"/>
        <end position="187"/>
    </location>
</feature>
<feature type="strand" evidence="9">
    <location>
        <begin position="201"/>
        <end position="204"/>
    </location>
</feature>
<feature type="strand" evidence="9">
    <location>
        <begin position="214"/>
        <end position="216"/>
    </location>
</feature>
<feature type="strand" evidence="9">
    <location>
        <begin position="220"/>
        <end position="224"/>
    </location>
</feature>
<feature type="strand" evidence="9">
    <location>
        <begin position="226"/>
        <end position="230"/>
    </location>
</feature>
<feature type="helix" evidence="9">
    <location>
        <begin position="235"/>
        <end position="238"/>
    </location>
</feature>
<feature type="strand" evidence="9">
    <location>
        <begin position="247"/>
        <end position="251"/>
    </location>
</feature>
<feature type="helix" evidence="9">
    <location>
        <begin position="254"/>
        <end position="273"/>
    </location>
</feature>
<feature type="helix" evidence="9">
    <location>
        <begin position="277"/>
        <end position="279"/>
    </location>
</feature>
<feature type="helix" evidence="9">
    <location>
        <begin position="281"/>
        <end position="293"/>
    </location>
</feature>
<feature type="helix" evidence="9">
    <location>
        <begin position="294"/>
        <end position="298"/>
    </location>
</feature>
<feature type="strand" evidence="9">
    <location>
        <begin position="315"/>
        <end position="317"/>
    </location>
</feature>
<feature type="strand" evidence="9">
    <location>
        <begin position="329"/>
        <end position="336"/>
    </location>
</feature>
<feature type="strand" evidence="9">
    <location>
        <begin position="339"/>
        <end position="342"/>
    </location>
</feature>
<feature type="strand" evidence="9">
    <location>
        <begin position="345"/>
        <end position="348"/>
    </location>
</feature>
<feature type="helix" evidence="9">
    <location>
        <begin position="349"/>
        <end position="351"/>
    </location>
</feature>
<feature type="helix" evidence="9">
    <location>
        <begin position="354"/>
        <end position="362"/>
    </location>
</feature>
<feature type="helix" evidence="9">
    <location>
        <begin position="364"/>
        <end position="366"/>
    </location>
</feature>
<feature type="strand" evidence="9">
    <location>
        <begin position="369"/>
        <end position="372"/>
    </location>
</feature>
<feature type="helix" evidence="9">
    <location>
        <begin position="373"/>
        <end position="391"/>
    </location>
</feature>
<feature type="strand" evidence="9">
    <location>
        <begin position="394"/>
        <end position="396"/>
    </location>
</feature>
<feature type="strand" evidence="9">
    <location>
        <begin position="401"/>
        <end position="406"/>
    </location>
</feature>
<feature type="turn" evidence="9">
    <location>
        <begin position="407"/>
        <end position="410"/>
    </location>
</feature>
<feature type="strand" evidence="9">
    <location>
        <begin position="423"/>
        <end position="428"/>
    </location>
</feature>
<feature type="turn" evidence="9">
    <location>
        <begin position="432"/>
        <end position="437"/>
    </location>
</feature>
<feature type="helix" evidence="9">
    <location>
        <begin position="441"/>
        <end position="457"/>
    </location>
</feature>
<feature type="helix" evidence="9">
    <location>
        <begin position="460"/>
        <end position="462"/>
    </location>
</feature>
<feature type="helix" evidence="9">
    <location>
        <begin position="463"/>
        <end position="474"/>
    </location>
</feature>
<feature type="strand" evidence="9">
    <location>
        <begin position="485"/>
        <end position="495"/>
    </location>
</feature>
<feature type="strand" evidence="9">
    <location>
        <begin position="511"/>
        <end position="518"/>
    </location>
</feature>
<feature type="helix" evidence="9">
    <location>
        <begin position="521"/>
        <end position="541"/>
    </location>
</feature>
<feature type="strand" evidence="9">
    <location>
        <begin position="542"/>
        <end position="544"/>
    </location>
</feature>
<feature type="helix" evidence="9">
    <location>
        <begin position="547"/>
        <end position="564"/>
    </location>
</feature>
<feature type="strand" evidence="9">
    <location>
        <begin position="569"/>
        <end position="572"/>
    </location>
</feature>
<feature type="helix" evidence="9">
    <location>
        <begin position="579"/>
        <end position="582"/>
    </location>
</feature>
<feature type="helix" evidence="9">
    <location>
        <begin position="583"/>
        <end position="586"/>
    </location>
</feature>
<feature type="helix" evidence="9">
    <location>
        <begin position="611"/>
        <end position="614"/>
    </location>
</feature>
<feature type="helix" evidence="9">
    <location>
        <begin position="616"/>
        <end position="620"/>
    </location>
</feature>
<feature type="helix" evidence="9">
    <location>
        <begin position="624"/>
        <end position="632"/>
    </location>
</feature>
<feature type="helix" evidence="9">
    <location>
        <begin position="644"/>
        <end position="660"/>
    </location>
</feature>
<feature type="strand" evidence="8">
    <location>
        <begin position="680"/>
        <end position="684"/>
    </location>
</feature>
<feature type="helix" evidence="8">
    <location>
        <begin position="688"/>
        <end position="690"/>
    </location>
</feature>
<feature type="helix" evidence="8">
    <location>
        <begin position="691"/>
        <end position="699"/>
    </location>
</feature>
<feature type="helix" evidence="8">
    <location>
        <begin position="707"/>
        <end position="709"/>
    </location>
</feature>
<feature type="strand" evidence="8">
    <location>
        <begin position="712"/>
        <end position="717"/>
    </location>
</feature>
<feature type="helix" evidence="8">
    <location>
        <begin position="721"/>
        <end position="729"/>
    </location>
</feature>
<feature type="turn" evidence="8">
    <location>
        <begin position="730"/>
        <end position="735"/>
    </location>
</feature>
<evidence type="ECO:0000250" key="1"/>
<evidence type="ECO:0000255" key="2">
    <source>
        <dbReference type="PROSITE-ProRule" id="PRU01102"/>
    </source>
</evidence>
<evidence type="ECO:0000269" key="3">
    <source>
    </source>
</evidence>
<evidence type="ECO:0000269" key="4">
    <source>
    </source>
</evidence>
<evidence type="ECO:0000269" key="5">
    <source>
    </source>
</evidence>
<evidence type="ECO:0000269" key="6">
    <source>
    </source>
</evidence>
<evidence type="ECO:0000305" key="7"/>
<evidence type="ECO:0007829" key="8">
    <source>
        <dbReference type="PDB" id="1DAQ"/>
    </source>
</evidence>
<evidence type="ECO:0007829" key="9">
    <source>
        <dbReference type="PDB" id="1L1Y"/>
    </source>
</evidence>
<evidence type="ECO:0007829" key="10">
    <source>
        <dbReference type="PDB" id="1L2A"/>
    </source>
</evidence>
<reference key="1">
    <citation type="journal article" date="1996" name="Biochemistry">
        <title>Dissociation of the cellulosome of Clostridium thermocellum in the presence of ethylenediaminetetraacetic acid occurs with the formation of trucated polypeptides.</title>
        <authorList>
            <person name="Choi S.K."/>
            <person name="Ljungdahl L.G."/>
        </authorList>
    </citation>
    <scope>PROTEIN SEQUENCE OF 28-46 AND 674-741</scope>
    <source>
        <strain>JW20</strain>
    </source>
</reference>
<reference key="2">
    <citation type="journal article" date="2001" name="J. Mol. Biol.">
        <title>Solution structure of a type I dockerin domain, a novel prokaryotic, extracellular calcium-binding domain.</title>
        <authorList>
            <person name="Lytle B.L."/>
            <person name="Volkman B.F."/>
            <person name="Westler W.M."/>
            <person name="Heckman M.P."/>
            <person name="Wu J.H."/>
        </authorList>
    </citation>
    <scope>STRUCTURE BY NMR OF 673-741 IN COMPLEX WITH CALCIUM</scope>
</reference>
<reference key="3">
    <citation type="journal article" date="2010" name="PLoS ONE">
        <title>Catalytic mechanism of cellulose degradation by a cellobiohydrolase, CelS.</title>
        <authorList>
            <person name="Saharay M."/>
            <person name="Guo H."/>
            <person name="Smith J.C."/>
        </authorList>
    </citation>
    <scope>FUNCTION</scope>
    <scope>CATALYTIC ACTIVITY</scope>
    <scope>ACTIVE SITE</scope>
</reference>
<reference key="4">
    <citation type="journal article" date="2002" name="J. Mol. Biol.">
        <title>The crystal structure and catalytic mechanism of cellobiohydrolase CelS, the major enzymatic component of the Clostridium thermocellum Cellulosome.</title>
        <authorList>
            <person name="Guimaraes B.G."/>
            <person name="Souchon H."/>
            <person name="Lytle B.L."/>
            <person name="David Wu J.H."/>
            <person name="Alzari P.M."/>
        </authorList>
    </citation>
    <scope>X-RAY CRYSTALLOGRAPHY (2.4 ANGSTROMS) OF 1-678 IN COMPLEX WITH SUBSTRATE</scope>
</reference>
<protein>
    <recommendedName>
        <fullName>Cellulose 1,4-beta-cellobiosidase (reducing end) CelS</fullName>
        <ecNumber>3.2.1.176</ecNumber>
    </recommendedName>
    <alternativeName>
        <fullName>Cellobiohydrolase CelS</fullName>
    </alternativeName>
    <alternativeName>
        <fullName>Cellulase SS</fullName>
    </alternativeName>
    <alternativeName>
        <fullName>Endo-1,4-beta-glucanase</fullName>
    </alternativeName>
    <alternativeName>
        <fullName>Endoglucanase SS</fullName>
        <shortName>EGSS</shortName>
    </alternativeName>
    <alternativeName>
        <fullName>Exocellulase</fullName>
    </alternativeName>
</protein>
<proteinExistence type="evidence at protein level"/>
<keyword id="KW-0002">3D-structure</keyword>
<keyword id="KW-0106">Calcium</keyword>
<keyword id="KW-0119">Carbohydrate metabolism</keyword>
<keyword id="KW-0136">Cellulose degradation</keyword>
<keyword id="KW-0903">Direct protein sequencing</keyword>
<keyword id="KW-0326">Glycosidase</keyword>
<keyword id="KW-0378">Hydrolase</keyword>
<keyword id="KW-0479">Metal-binding</keyword>
<keyword id="KW-0624">Polysaccharide degradation</keyword>
<keyword id="KW-0964">Secreted</keyword>
<keyword id="KW-0732">Signal</keyword>
<name>GUNS_ACETH</name>